<feature type="chain" id="PRO_0000069340" description="C-X-C chemokine receptor type 2">
    <location>
        <begin position="1" status="less than"/>
        <end position="357"/>
    </location>
</feature>
<feature type="topological domain" description="Extracellular" evidence="3">
    <location>
        <begin position="1" status="less than"/>
        <end position="45"/>
    </location>
</feature>
<feature type="transmembrane region" description="Helical; Name=1" evidence="3">
    <location>
        <begin position="46"/>
        <end position="72"/>
    </location>
</feature>
<feature type="topological domain" description="Cytoplasmic" evidence="3">
    <location>
        <begin position="73"/>
        <end position="81"/>
    </location>
</feature>
<feature type="transmembrane region" description="Helical; Name=2" evidence="3">
    <location>
        <begin position="82"/>
        <end position="102"/>
    </location>
</feature>
<feature type="topological domain" description="Extracellular" evidence="3">
    <location>
        <begin position="103"/>
        <end position="117"/>
    </location>
</feature>
<feature type="transmembrane region" description="Helical; Name=3" evidence="3">
    <location>
        <begin position="118"/>
        <end position="139"/>
    </location>
</feature>
<feature type="topological domain" description="Cytoplasmic" evidence="3">
    <location>
        <begin position="140"/>
        <end position="160"/>
    </location>
</feature>
<feature type="transmembrane region" description="Helical; Name=4" evidence="3">
    <location>
        <begin position="161"/>
        <end position="180"/>
    </location>
</feature>
<feature type="topological domain" description="Extracellular" evidence="3">
    <location>
        <begin position="181"/>
        <end position="205"/>
    </location>
</feature>
<feature type="transmembrane region" description="Helical; Name=5" evidence="3">
    <location>
        <begin position="206"/>
        <end position="228"/>
    </location>
</feature>
<feature type="topological domain" description="Cytoplasmic" evidence="3">
    <location>
        <begin position="229"/>
        <end position="248"/>
    </location>
</feature>
<feature type="transmembrane region" description="Helical; Name=6" evidence="3">
    <location>
        <begin position="249"/>
        <end position="270"/>
    </location>
</feature>
<feature type="topological domain" description="Extracellular" evidence="3">
    <location>
        <begin position="271"/>
        <end position="291"/>
    </location>
</feature>
<feature type="transmembrane region" description="Helical; Name=7" evidence="3">
    <location>
        <begin position="292"/>
        <end position="312"/>
    </location>
</feature>
<feature type="topological domain" description="Cytoplasmic" evidence="3">
    <location>
        <begin position="313"/>
        <end position="357"/>
    </location>
</feature>
<feature type="glycosylation site" description="N-linked (GlcNAc...) asparagine" evidence="3">
    <location>
        <position position="19"/>
    </location>
</feature>
<feature type="disulfide bond" evidence="4">
    <location>
        <begin position="116"/>
        <end position="193"/>
    </location>
</feature>
<feature type="sequence conflict" description="In Ref. 2; CAA62563." evidence="5" ref="2">
    <original>I</original>
    <variation>M</variation>
    <location>
        <position position="210"/>
    </location>
</feature>
<feature type="sequence conflict" description="In Ref. 2; CAA62563." evidence="5" ref="2">
    <original>D</original>
    <variation>N</variation>
    <location>
        <position position="290"/>
    </location>
</feature>
<feature type="non-terminal residue">
    <location>
        <position position="1"/>
    </location>
</feature>
<comment type="function">
    <text evidence="2">Receptor for interleukin-8 which is a powerful neutrophil chemotactic factor. Binding of IL-8 to the receptor causes activation of neutrophils. This response is mediated via a G-protein that activates a phosphatidylinositol-calcium second messenger system. Binds to IL-8 with high affinity. Also binds with high affinity to CXCL3, GRO/MGSA and NAP-2.</text>
</comment>
<comment type="subunit">
    <text evidence="2">Interacts with IL8. Interacts with GNAI2.</text>
</comment>
<comment type="subcellular location">
    <subcellularLocation>
        <location>Cell membrane</location>
        <topology>Multi-pass membrane protein</topology>
    </subcellularLocation>
</comment>
<comment type="PTM">
    <text evidence="1">Phosphorylated upon ligand binding; which is required for desensitization.</text>
</comment>
<comment type="similarity">
    <text evidence="4">Belongs to the G-protein coupled receptor 1 family.</text>
</comment>
<evidence type="ECO:0000250" key="1"/>
<evidence type="ECO:0000250" key="2">
    <source>
        <dbReference type="UniProtKB" id="P25025"/>
    </source>
</evidence>
<evidence type="ECO:0000255" key="3"/>
<evidence type="ECO:0000255" key="4">
    <source>
        <dbReference type="PROSITE-ProRule" id="PRU00521"/>
    </source>
</evidence>
<evidence type="ECO:0000305" key="5"/>
<organism>
    <name type="scientific">Pan troglodytes</name>
    <name type="common">Chimpanzee</name>
    <dbReference type="NCBI Taxonomy" id="9598"/>
    <lineage>
        <taxon>Eukaryota</taxon>
        <taxon>Metazoa</taxon>
        <taxon>Chordata</taxon>
        <taxon>Craniata</taxon>
        <taxon>Vertebrata</taxon>
        <taxon>Euteleostomi</taxon>
        <taxon>Mammalia</taxon>
        <taxon>Eutheria</taxon>
        <taxon>Euarchontoglires</taxon>
        <taxon>Primates</taxon>
        <taxon>Haplorrhini</taxon>
        <taxon>Catarrhini</taxon>
        <taxon>Hominidae</taxon>
        <taxon>Pan</taxon>
    </lineage>
</organism>
<protein>
    <recommendedName>
        <fullName>C-X-C chemokine receptor type 2</fullName>
        <shortName>CXC-R2</shortName>
        <shortName>CXCR-2</shortName>
    </recommendedName>
    <alternativeName>
        <fullName>High affinity interleukin-8 receptor B</fullName>
        <shortName>IL-8R B</shortName>
    </alternativeName>
    <cdAntigenName>CD182</cdAntigenName>
</protein>
<dbReference type="EMBL" id="X91113">
    <property type="protein sequence ID" value="CAA62563.1"/>
    <property type="molecule type" value="Genomic_DNA"/>
</dbReference>
<dbReference type="EMBL" id="AF540789">
    <property type="protein sequence ID" value="AAN17315.1"/>
    <property type="molecule type" value="Genomic_DNA"/>
</dbReference>
<dbReference type="SMR" id="Q28807"/>
<dbReference type="STRING" id="9598.ENSPTRP00000076345"/>
<dbReference type="GlyCosmos" id="Q28807">
    <property type="glycosylation" value="1 site, No reported glycans"/>
</dbReference>
<dbReference type="PaxDb" id="9598-ENSPTRP00000022068"/>
<dbReference type="eggNOG" id="KOG3656">
    <property type="taxonomic scope" value="Eukaryota"/>
</dbReference>
<dbReference type="InParanoid" id="Q28807"/>
<dbReference type="Proteomes" id="UP000002277">
    <property type="component" value="Unplaced"/>
</dbReference>
<dbReference type="GO" id="GO:0009897">
    <property type="term" value="C:external side of plasma membrane"/>
    <property type="evidence" value="ECO:0000318"/>
    <property type="project" value="GO_Central"/>
</dbReference>
<dbReference type="GO" id="GO:0019957">
    <property type="term" value="F:C-C chemokine binding"/>
    <property type="evidence" value="ECO:0000318"/>
    <property type="project" value="GO_Central"/>
</dbReference>
<dbReference type="GO" id="GO:0016493">
    <property type="term" value="F:C-C chemokine receptor activity"/>
    <property type="evidence" value="ECO:0000318"/>
    <property type="project" value="GO_Central"/>
</dbReference>
<dbReference type="GO" id="GO:0016494">
    <property type="term" value="F:C-X-C chemokine receptor activity"/>
    <property type="evidence" value="ECO:0007669"/>
    <property type="project" value="InterPro"/>
</dbReference>
<dbReference type="GO" id="GO:0019959">
    <property type="term" value="F:interleukin-8 binding"/>
    <property type="evidence" value="ECO:0007669"/>
    <property type="project" value="InterPro"/>
</dbReference>
<dbReference type="GO" id="GO:0019722">
    <property type="term" value="P:calcium-mediated signaling"/>
    <property type="evidence" value="ECO:0000318"/>
    <property type="project" value="GO_Central"/>
</dbReference>
<dbReference type="GO" id="GO:0006955">
    <property type="term" value="P:immune response"/>
    <property type="evidence" value="ECO:0000318"/>
    <property type="project" value="GO_Central"/>
</dbReference>
<dbReference type="GO" id="GO:0030593">
    <property type="term" value="P:neutrophil chemotaxis"/>
    <property type="evidence" value="ECO:0000318"/>
    <property type="project" value="GO_Central"/>
</dbReference>
<dbReference type="GO" id="GO:0007204">
    <property type="term" value="P:positive regulation of cytosolic calcium ion concentration"/>
    <property type="evidence" value="ECO:0000318"/>
    <property type="project" value="GO_Central"/>
</dbReference>
<dbReference type="CDD" id="cd15178">
    <property type="entry name" value="7tmA_CXCR1_2"/>
    <property type="match status" value="1"/>
</dbReference>
<dbReference type="FunFam" id="1.20.1070.10:FF:000157">
    <property type="entry name" value="C-X-C chemokine receptor type 2"/>
    <property type="match status" value="1"/>
</dbReference>
<dbReference type="Gene3D" id="1.20.1070.10">
    <property type="entry name" value="Rhodopsin 7-helix transmembrane proteins"/>
    <property type="match status" value="1"/>
</dbReference>
<dbReference type="InterPro" id="IPR050119">
    <property type="entry name" value="CCR1-9-like"/>
</dbReference>
<dbReference type="InterPro" id="IPR000057">
    <property type="entry name" value="Chemokine_CXCR2"/>
</dbReference>
<dbReference type="InterPro" id="IPR000174">
    <property type="entry name" value="Chemokine_CXCR_1/2"/>
</dbReference>
<dbReference type="InterPro" id="IPR000276">
    <property type="entry name" value="GPCR_Rhodpsn"/>
</dbReference>
<dbReference type="InterPro" id="IPR017452">
    <property type="entry name" value="GPCR_Rhodpsn_7TM"/>
</dbReference>
<dbReference type="PANTHER" id="PTHR10489:SF689">
    <property type="entry name" value="C-X-C CHEMOKINE RECEPTOR TYPE 2"/>
    <property type="match status" value="1"/>
</dbReference>
<dbReference type="PANTHER" id="PTHR10489">
    <property type="entry name" value="CELL ADHESION MOLECULE"/>
    <property type="match status" value="1"/>
</dbReference>
<dbReference type="Pfam" id="PF00001">
    <property type="entry name" value="7tm_1"/>
    <property type="match status" value="1"/>
</dbReference>
<dbReference type="PRINTS" id="PR00237">
    <property type="entry name" value="GPCRRHODOPSN"/>
</dbReference>
<dbReference type="PRINTS" id="PR00427">
    <property type="entry name" value="INTRLEUKIN8R"/>
</dbReference>
<dbReference type="PRINTS" id="PR00573">
    <property type="entry name" value="INTRLEUKN8BR"/>
</dbReference>
<dbReference type="SUPFAM" id="SSF81321">
    <property type="entry name" value="Family A G protein-coupled receptor-like"/>
    <property type="match status" value="1"/>
</dbReference>
<dbReference type="PROSITE" id="PS00237">
    <property type="entry name" value="G_PROTEIN_RECEP_F1_1"/>
    <property type="match status" value="1"/>
</dbReference>
<dbReference type="PROSITE" id="PS50262">
    <property type="entry name" value="G_PROTEIN_RECEP_F1_2"/>
    <property type="match status" value="1"/>
</dbReference>
<gene>
    <name type="primary">CXCR2</name>
    <name type="synonym">IL8RB</name>
</gene>
<accession>Q28807</accession>
<accession>Q8HZN8</accession>
<sequence>FNMESDSFEDFWKGEDLSNYSYSSTLPPFLLDAAPCEPESLEINKYFVVIIYALVFLLSLLGNSLVMLVILYSRVGRSVTDVYLLNLALADLLFALTLPIWAASKVNGWIFGTFLCKVVSLLKEVNFYSGILLLACISVDRYLAIVHATRTLTQKRYLVKFICLSIWGLSLLLALPVLLFRRTVYSSNVSPACYEDMGNNTANWRMLLRILPQSFGFIVPLLIMLFCYGFTLRTLFKAHMGQKHRAMRVIFAVVLIFLLCWLPYNLVLLADTLMRTQVIQETCERRNHIDRALDATEILGILHSCLNPLIYAFIGQKFRHGLLKILAIHGLISKDSLPKDSRPSFVGSSSGHTSTTL</sequence>
<reference key="1">
    <citation type="journal article" date="1996" name="Immunogenetics">
        <title>Characterization of interleukin-8 receptors in non-human primates.</title>
        <authorList>
            <person name="Alvarez V."/>
            <person name="Coto E."/>
            <person name="Setien F."/>
            <person name="Gonzalez S."/>
            <person name="Gonzalez-Roces S."/>
            <person name="Lopez-Larrea C."/>
        </authorList>
    </citation>
    <scope>NUCLEOTIDE SEQUENCE [GENOMIC DNA] OF 1-353</scope>
</reference>
<reference key="2">
    <citation type="submission" date="2002-08" db="EMBL/GenBank/DDBJ databases">
        <title>Orthologs of human receptors and methods of use.</title>
        <authorList>
            <person name="Horlick R.A."/>
            <person name="Zhao J."/>
            <person name="Swanson R.N."/>
            <person name="Webb M.L."/>
            <person name="Strohl B."/>
            <person name="Baldwin J.J."/>
            <person name="Auld D.S."/>
        </authorList>
    </citation>
    <scope>NUCLEOTIDE SEQUENCE [GENOMIC DNA] OF 3-357</scope>
</reference>
<proteinExistence type="inferred from homology"/>
<keyword id="KW-1003">Cell membrane</keyword>
<keyword id="KW-0145">Chemotaxis</keyword>
<keyword id="KW-1015">Disulfide bond</keyword>
<keyword id="KW-0297">G-protein coupled receptor</keyword>
<keyword id="KW-0325">Glycoprotein</keyword>
<keyword id="KW-0472">Membrane</keyword>
<keyword id="KW-0597">Phosphoprotein</keyword>
<keyword id="KW-0675">Receptor</keyword>
<keyword id="KW-1185">Reference proteome</keyword>
<keyword id="KW-0807">Transducer</keyword>
<keyword id="KW-0812">Transmembrane</keyword>
<keyword id="KW-1133">Transmembrane helix</keyword>
<name>CXCR2_PANTR</name>